<protein>
    <recommendedName>
        <fullName evidence="1">Multidrug resistance protein MdtA</fullName>
    </recommendedName>
    <alternativeName>
        <fullName evidence="1">Multidrug transporter MdtA</fullName>
    </alternativeName>
</protein>
<sequence>MKGSYKSRWVIVIVVVIAAIAAFWFWQGRNDSRSAAPGATKQAQQSPAGGRRGMRSGPLAPVQAATAVEQAVPRYLTGLGTITAANTVTVRSRVDGQLIALHFQEGQQVKAGDLLAEIDPSQFKVALAQAQGQLAKDKATLANARRDLARYQQLAKTNLVSRQELDAQQALVSETEGTIKADEASVASAQLQLDWSRITAPVDGRVGLKQVDVGNQISSGDTTGIVVITQTHPIDLVFTLPESDIATVVQAQKAGKPLVVEAWDRTNSKKLSEGTLLSLDNQIDATTGTIKVKARFNNQDDALFPNQFVNARMLVDTEQNAVVIPTAALQMGNEGHFVWVLNSENKVSKHLVTPGIQDSQKVVIRAGISAGDRVVTDGIDRLTEGAKVEVVEAQSATTPEEKATSREYAKKGARS</sequence>
<proteinExistence type="inferred from homology"/>
<organism>
    <name type="scientific">Escherichia coli (strain K12 / MC4100 / BW2952)</name>
    <dbReference type="NCBI Taxonomy" id="595496"/>
    <lineage>
        <taxon>Bacteria</taxon>
        <taxon>Pseudomonadati</taxon>
        <taxon>Pseudomonadota</taxon>
        <taxon>Gammaproteobacteria</taxon>
        <taxon>Enterobacterales</taxon>
        <taxon>Enterobacteriaceae</taxon>
        <taxon>Escherichia</taxon>
    </lineage>
</organism>
<evidence type="ECO:0000255" key="1">
    <source>
        <dbReference type="HAMAP-Rule" id="MF_01422"/>
    </source>
</evidence>
<evidence type="ECO:0000256" key="2">
    <source>
        <dbReference type="SAM" id="MobiDB-lite"/>
    </source>
</evidence>
<name>MDTA_ECOBW</name>
<accession>C4ZSG2</accession>
<keyword id="KW-0997">Cell inner membrane</keyword>
<keyword id="KW-1003">Cell membrane</keyword>
<keyword id="KW-0472">Membrane</keyword>
<keyword id="KW-0732">Signal</keyword>
<keyword id="KW-0813">Transport</keyword>
<dbReference type="EMBL" id="CP001396">
    <property type="protein sequence ID" value="ACR63820.1"/>
    <property type="molecule type" value="Genomic_DNA"/>
</dbReference>
<dbReference type="RefSeq" id="WP_000678989.1">
    <property type="nucleotide sequence ID" value="NC_012759.1"/>
</dbReference>
<dbReference type="SMR" id="C4ZSG2"/>
<dbReference type="KEGG" id="ebw:BWG_1864"/>
<dbReference type="HOGENOM" id="CLU_018816_2_0_6"/>
<dbReference type="GO" id="GO:1990281">
    <property type="term" value="C:efflux pump complex"/>
    <property type="evidence" value="ECO:0007669"/>
    <property type="project" value="TreeGrafter"/>
</dbReference>
<dbReference type="GO" id="GO:0005886">
    <property type="term" value="C:plasma membrane"/>
    <property type="evidence" value="ECO:0007669"/>
    <property type="project" value="UniProtKB-SubCell"/>
</dbReference>
<dbReference type="GO" id="GO:0015562">
    <property type="term" value="F:efflux transmembrane transporter activity"/>
    <property type="evidence" value="ECO:0007669"/>
    <property type="project" value="TreeGrafter"/>
</dbReference>
<dbReference type="FunFam" id="2.40.420.20:FF:000001">
    <property type="entry name" value="Efflux RND transporter periplasmic adaptor subunit"/>
    <property type="match status" value="1"/>
</dbReference>
<dbReference type="FunFam" id="1.10.287.470:FF:000005">
    <property type="entry name" value="Multidrug resistance protein MdtA"/>
    <property type="match status" value="1"/>
</dbReference>
<dbReference type="FunFam" id="2.40.30.170:FF:000006">
    <property type="entry name" value="Multidrug resistance protein MdtA"/>
    <property type="match status" value="1"/>
</dbReference>
<dbReference type="Gene3D" id="2.40.30.170">
    <property type="match status" value="1"/>
</dbReference>
<dbReference type="Gene3D" id="2.40.420.20">
    <property type="match status" value="1"/>
</dbReference>
<dbReference type="Gene3D" id="2.40.50.100">
    <property type="match status" value="1"/>
</dbReference>
<dbReference type="Gene3D" id="1.10.287.470">
    <property type="entry name" value="Helix hairpin bin"/>
    <property type="match status" value="1"/>
</dbReference>
<dbReference type="HAMAP" id="MF_01422">
    <property type="entry name" value="MdtA"/>
    <property type="match status" value="1"/>
</dbReference>
<dbReference type="InterPro" id="IPR032317">
    <property type="entry name" value="CusB_D23"/>
</dbReference>
<dbReference type="InterPro" id="IPR022824">
    <property type="entry name" value="Multidrug-R_MdtA"/>
</dbReference>
<dbReference type="InterPro" id="IPR006143">
    <property type="entry name" value="RND_pump_MFP"/>
</dbReference>
<dbReference type="NCBIfam" id="NF008589">
    <property type="entry name" value="PRK11556.1"/>
    <property type="match status" value="1"/>
</dbReference>
<dbReference type="NCBIfam" id="TIGR01730">
    <property type="entry name" value="RND_mfp"/>
    <property type="match status" value="1"/>
</dbReference>
<dbReference type="PANTHER" id="PTHR30469">
    <property type="entry name" value="MULTIDRUG RESISTANCE PROTEIN MDTA"/>
    <property type="match status" value="1"/>
</dbReference>
<dbReference type="PANTHER" id="PTHR30469:SF12">
    <property type="entry name" value="MULTIDRUG RESISTANCE PROTEIN MDTA"/>
    <property type="match status" value="1"/>
</dbReference>
<dbReference type="Pfam" id="PF16576">
    <property type="entry name" value="HlyD_D23"/>
    <property type="match status" value="1"/>
</dbReference>
<dbReference type="SUPFAM" id="SSF111369">
    <property type="entry name" value="HlyD-like secretion proteins"/>
    <property type="match status" value="1"/>
</dbReference>
<reference key="1">
    <citation type="journal article" date="2009" name="J. Bacteriol.">
        <title>Genomic sequencing reveals regulatory mutations and recombinational events in the widely used MC4100 lineage of Escherichia coli K-12.</title>
        <authorList>
            <person name="Ferenci T."/>
            <person name="Zhou Z."/>
            <person name="Betteridge T."/>
            <person name="Ren Y."/>
            <person name="Liu Y."/>
            <person name="Feng L."/>
            <person name="Reeves P.R."/>
            <person name="Wang L."/>
        </authorList>
    </citation>
    <scope>NUCLEOTIDE SEQUENCE [LARGE SCALE GENOMIC DNA]</scope>
    <source>
        <strain>K12 / MC4100 / BW2952</strain>
    </source>
</reference>
<feature type="signal peptide" evidence="1">
    <location>
        <begin position="1"/>
        <end position="21"/>
    </location>
</feature>
<feature type="chain" id="PRO_1000215260" description="Multidrug resistance protein MdtA">
    <location>
        <begin position="22"/>
        <end position="415"/>
    </location>
</feature>
<feature type="region of interest" description="Disordered" evidence="2">
    <location>
        <begin position="32"/>
        <end position="60"/>
    </location>
</feature>
<feature type="region of interest" description="Disordered" evidence="2">
    <location>
        <begin position="392"/>
        <end position="415"/>
    </location>
</feature>
<feature type="compositionally biased region" description="Basic and acidic residues" evidence="2">
    <location>
        <begin position="399"/>
        <end position="415"/>
    </location>
</feature>
<gene>
    <name evidence="1" type="primary">mdtA</name>
    <name type="ordered locus">BWG_1864</name>
</gene>
<comment type="function">
    <text evidence="1">The MdtABC tripartite complex confers resistance against novobiocin and deoxycholate.</text>
</comment>
<comment type="subunit">
    <text evidence="1">Part of a tripartite efflux system composed of MdtA, MdtB and MdtC.</text>
</comment>
<comment type="subcellular location">
    <subcellularLocation>
        <location evidence="1">Cell inner membrane</location>
        <topology evidence="1">Peripheral membrane protein</topology>
    </subcellularLocation>
</comment>
<comment type="induction">
    <text evidence="1">The mdtABC operon is transcriptionally activated by BaeR.</text>
</comment>
<comment type="similarity">
    <text evidence="1">Belongs to the membrane fusion protein (MFP) (TC 8.A.1) family.</text>
</comment>